<sequence length="337" mass="35762">MKRIAVLTSGGDAPGMNAAIRAVVRKAISEGMEVYGINRGYAGMVDGDIFPLGSKEVGDKISRGGTFLYSARYPEFAQLEGQLAGIEQLKKHGIEGVVVIGGDGSYHGAMRLTEHGFPAVGIPGTIDNDIAGTDYTIGFDTAVNTAVEAIDKLRDTSSSHGRTFVVEVMGRNAGDIALWAGIASGADQIIVPEEEFDIEKVASTIQYDFEHKGKNHHIIVLAEGVMSGEAFAQKLKEAGDKSDLRVTNLGHILRGGSPTARDRVIASWMGSHAVELLKEGKGGLAVGIHNEELVESPILGTAEEGALFSLTEEGKIIVNNPHKARLDFAALNRSLSQ</sequence>
<gene>
    <name evidence="1" type="primary">pfkA</name>
    <name type="ordered locus">SpyM50812</name>
</gene>
<reference key="1">
    <citation type="journal article" date="2007" name="J. Bacteriol.">
        <title>Complete genome of acute rheumatic fever-associated serotype M5 Streptococcus pyogenes strain Manfredo.</title>
        <authorList>
            <person name="Holden M.T.G."/>
            <person name="Scott A."/>
            <person name="Cherevach I."/>
            <person name="Chillingworth T."/>
            <person name="Churcher C."/>
            <person name="Cronin A."/>
            <person name="Dowd L."/>
            <person name="Feltwell T."/>
            <person name="Hamlin N."/>
            <person name="Holroyd S."/>
            <person name="Jagels K."/>
            <person name="Moule S."/>
            <person name="Mungall K."/>
            <person name="Quail M.A."/>
            <person name="Price C."/>
            <person name="Rabbinowitsch E."/>
            <person name="Sharp S."/>
            <person name="Skelton J."/>
            <person name="Whitehead S."/>
            <person name="Barrell B.G."/>
            <person name="Kehoe M."/>
            <person name="Parkhill J."/>
        </authorList>
    </citation>
    <scope>NUCLEOTIDE SEQUENCE [LARGE SCALE GENOMIC DNA]</scope>
    <source>
        <strain>Manfredo</strain>
    </source>
</reference>
<feature type="chain" id="PRO_1000059799" description="ATP-dependent 6-phosphofructokinase">
    <location>
        <begin position="1"/>
        <end position="337"/>
    </location>
</feature>
<feature type="active site" description="Proton acceptor" evidence="1">
    <location>
        <position position="127"/>
    </location>
</feature>
<feature type="binding site" evidence="1">
    <location>
        <position position="11"/>
    </location>
    <ligand>
        <name>ATP</name>
        <dbReference type="ChEBI" id="CHEBI:30616"/>
    </ligand>
</feature>
<feature type="binding site" evidence="1">
    <location>
        <begin position="21"/>
        <end position="25"/>
    </location>
    <ligand>
        <name>ADP</name>
        <dbReference type="ChEBI" id="CHEBI:456216"/>
        <note>allosteric activator; ligand shared between dimeric partners</note>
    </ligand>
</feature>
<feature type="binding site" evidence="1">
    <location>
        <begin position="72"/>
        <end position="73"/>
    </location>
    <ligand>
        <name>ATP</name>
        <dbReference type="ChEBI" id="CHEBI:30616"/>
    </ligand>
</feature>
<feature type="binding site" evidence="1">
    <location>
        <begin position="102"/>
        <end position="105"/>
    </location>
    <ligand>
        <name>ATP</name>
        <dbReference type="ChEBI" id="CHEBI:30616"/>
    </ligand>
</feature>
<feature type="binding site" evidence="1">
    <location>
        <position position="103"/>
    </location>
    <ligand>
        <name>Mg(2+)</name>
        <dbReference type="ChEBI" id="CHEBI:18420"/>
        <note>catalytic</note>
    </ligand>
</feature>
<feature type="binding site" description="in other chain" evidence="1">
    <location>
        <begin position="125"/>
        <end position="127"/>
    </location>
    <ligand>
        <name>substrate</name>
        <note>ligand shared between dimeric partners</note>
    </ligand>
</feature>
<feature type="binding site" description="in other chain" evidence="1">
    <location>
        <position position="154"/>
    </location>
    <ligand>
        <name>ADP</name>
        <dbReference type="ChEBI" id="CHEBI:456216"/>
        <note>allosteric activator; ligand shared between dimeric partners</note>
    </ligand>
</feature>
<feature type="binding site" evidence="1">
    <location>
        <position position="162"/>
    </location>
    <ligand>
        <name>substrate</name>
        <note>ligand shared between dimeric partners</note>
    </ligand>
</feature>
<feature type="binding site" description="in other chain" evidence="1">
    <location>
        <begin position="169"/>
        <end position="171"/>
    </location>
    <ligand>
        <name>substrate</name>
        <note>ligand shared between dimeric partners</note>
    </ligand>
</feature>
<feature type="binding site" description="in other chain" evidence="1">
    <location>
        <begin position="185"/>
        <end position="187"/>
    </location>
    <ligand>
        <name>ADP</name>
        <dbReference type="ChEBI" id="CHEBI:456216"/>
        <note>allosteric activator; ligand shared between dimeric partners</note>
    </ligand>
</feature>
<feature type="binding site" description="in other chain" evidence="1">
    <location>
        <position position="212"/>
    </location>
    <ligand>
        <name>ADP</name>
        <dbReference type="ChEBI" id="CHEBI:456216"/>
        <note>allosteric activator; ligand shared between dimeric partners</note>
    </ligand>
</feature>
<feature type="binding site" description="in other chain" evidence="1">
    <location>
        <begin position="214"/>
        <end position="216"/>
    </location>
    <ligand>
        <name>ADP</name>
        <dbReference type="ChEBI" id="CHEBI:456216"/>
        <note>allosteric activator; ligand shared between dimeric partners</note>
    </ligand>
</feature>
<feature type="binding site" description="in other chain" evidence="1">
    <location>
        <position position="223"/>
    </location>
    <ligand>
        <name>substrate</name>
        <note>ligand shared between dimeric partners</note>
    </ligand>
</feature>
<feature type="binding site" evidence="1">
    <location>
        <position position="245"/>
    </location>
    <ligand>
        <name>substrate</name>
        <note>ligand shared between dimeric partners</note>
    </ligand>
</feature>
<feature type="binding site" description="in other chain" evidence="1">
    <location>
        <begin position="251"/>
        <end position="254"/>
    </location>
    <ligand>
        <name>substrate</name>
        <note>ligand shared between dimeric partners</note>
    </ligand>
</feature>
<proteinExistence type="inferred from homology"/>
<comment type="function">
    <text evidence="1">Catalyzes the phosphorylation of D-fructose 6-phosphate to fructose 1,6-bisphosphate by ATP, the first committing step of glycolysis.</text>
</comment>
<comment type="catalytic activity">
    <reaction evidence="1">
        <text>beta-D-fructose 6-phosphate + ATP = beta-D-fructose 1,6-bisphosphate + ADP + H(+)</text>
        <dbReference type="Rhea" id="RHEA:16109"/>
        <dbReference type="ChEBI" id="CHEBI:15378"/>
        <dbReference type="ChEBI" id="CHEBI:30616"/>
        <dbReference type="ChEBI" id="CHEBI:32966"/>
        <dbReference type="ChEBI" id="CHEBI:57634"/>
        <dbReference type="ChEBI" id="CHEBI:456216"/>
        <dbReference type="EC" id="2.7.1.11"/>
    </reaction>
</comment>
<comment type="cofactor">
    <cofactor evidence="1">
        <name>Mg(2+)</name>
        <dbReference type="ChEBI" id="CHEBI:18420"/>
    </cofactor>
</comment>
<comment type="activity regulation">
    <text evidence="1">Allosterically activated by ADP and other diphosphonucleosides, and allosterically inhibited by phosphoenolpyruvate.</text>
</comment>
<comment type="pathway">
    <text evidence="1">Carbohydrate degradation; glycolysis; D-glyceraldehyde 3-phosphate and glycerone phosphate from D-glucose: step 3/4.</text>
</comment>
<comment type="subunit">
    <text evidence="1">Homotetramer.</text>
</comment>
<comment type="subcellular location">
    <subcellularLocation>
        <location evidence="1">Cytoplasm</location>
    </subcellularLocation>
</comment>
<comment type="similarity">
    <text evidence="1">Belongs to the phosphofructokinase type A (PFKA) family. ATP-dependent PFK group I subfamily. Prokaryotic clade 'B1' sub-subfamily.</text>
</comment>
<evidence type="ECO:0000255" key="1">
    <source>
        <dbReference type="HAMAP-Rule" id="MF_00339"/>
    </source>
</evidence>
<dbReference type="EC" id="2.7.1.11" evidence="1"/>
<dbReference type="EMBL" id="AM295007">
    <property type="protein sequence ID" value="CAM30140.1"/>
    <property type="molecule type" value="Genomic_DNA"/>
</dbReference>
<dbReference type="RefSeq" id="WP_002984444.1">
    <property type="nucleotide sequence ID" value="NC_009332.1"/>
</dbReference>
<dbReference type="SMR" id="A2RE65"/>
<dbReference type="GeneID" id="69900759"/>
<dbReference type="KEGG" id="spf:SpyM50812"/>
<dbReference type="HOGENOM" id="CLU_020655_0_1_9"/>
<dbReference type="UniPathway" id="UPA00109">
    <property type="reaction ID" value="UER00182"/>
</dbReference>
<dbReference type="GO" id="GO:0005945">
    <property type="term" value="C:6-phosphofructokinase complex"/>
    <property type="evidence" value="ECO:0007669"/>
    <property type="project" value="TreeGrafter"/>
</dbReference>
<dbReference type="GO" id="GO:0003872">
    <property type="term" value="F:6-phosphofructokinase activity"/>
    <property type="evidence" value="ECO:0007669"/>
    <property type="project" value="UniProtKB-UniRule"/>
</dbReference>
<dbReference type="GO" id="GO:0016208">
    <property type="term" value="F:AMP binding"/>
    <property type="evidence" value="ECO:0007669"/>
    <property type="project" value="TreeGrafter"/>
</dbReference>
<dbReference type="GO" id="GO:0005524">
    <property type="term" value="F:ATP binding"/>
    <property type="evidence" value="ECO:0007669"/>
    <property type="project" value="UniProtKB-KW"/>
</dbReference>
<dbReference type="GO" id="GO:0070095">
    <property type="term" value="F:fructose-6-phosphate binding"/>
    <property type="evidence" value="ECO:0007669"/>
    <property type="project" value="TreeGrafter"/>
</dbReference>
<dbReference type="GO" id="GO:0042802">
    <property type="term" value="F:identical protein binding"/>
    <property type="evidence" value="ECO:0007669"/>
    <property type="project" value="TreeGrafter"/>
</dbReference>
<dbReference type="GO" id="GO:0046872">
    <property type="term" value="F:metal ion binding"/>
    <property type="evidence" value="ECO:0007669"/>
    <property type="project" value="UniProtKB-KW"/>
</dbReference>
<dbReference type="GO" id="GO:0048029">
    <property type="term" value="F:monosaccharide binding"/>
    <property type="evidence" value="ECO:0007669"/>
    <property type="project" value="TreeGrafter"/>
</dbReference>
<dbReference type="GO" id="GO:0061621">
    <property type="term" value="P:canonical glycolysis"/>
    <property type="evidence" value="ECO:0007669"/>
    <property type="project" value="TreeGrafter"/>
</dbReference>
<dbReference type="GO" id="GO:0030388">
    <property type="term" value="P:fructose 1,6-bisphosphate metabolic process"/>
    <property type="evidence" value="ECO:0007669"/>
    <property type="project" value="TreeGrafter"/>
</dbReference>
<dbReference type="GO" id="GO:0006002">
    <property type="term" value="P:fructose 6-phosphate metabolic process"/>
    <property type="evidence" value="ECO:0007669"/>
    <property type="project" value="InterPro"/>
</dbReference>
<dbReference type="FunFam" id="3.40.50.450:FF:000001">
    <property type="entry name" value="ATP-dependent 6-phosphofructokinase"/>
    <property type="match status" value="1"/>
</dbReference>
<dbReference type="FunFam" id="3.40.50.460:FF:000002">
    <property type="entry name" value="ATP-dependent 6-phosphofructokinase"/>
    <property type="match status" value="1"/>
</dbReference>
<dbReference type="Gene3D" id="3.40.50.450">
    <property type="match status" value="1"/>
</dbReference>
<dbReference type="Gene3D" id="3.40.50.460">
    <property type="entry name" value="Phosphofructokinase domain"/>
    <property type="match status" value="1"/>
</dbReference>
<dbReference type="HAMAP" id="MF_00339">
    <property type="entry name" value="Phosphofructokinase_I_B1"/>
    <property type="match status" value="1"/>
</dbReference>
<dbReference type="InterPro" id="IPR022953">
    <property type="entry name" value="ATP_PFK"/>
</dbReference>
<dbReference type="InterPro" id="IPR012003">
    <property type="entry name" value="ATP_PFK_prok-type"/>
</dbReference>
<dbReference type="InterPro" id="IPR012828">
    <property type="entry name" value="PFKA_ATP_prok"/>
</dbReference>
<dbReference type="InterPro" id="IPR015912">
    <property type="entry name" value="Phosphofructokinase_CS"/>
</dbReference>
<dbReference type="InterPro" id="IPR000023">
    <property type="entry name" value="Phosphofructokinase_dom"/>
</dbReference>
<dbReference type="InterPro" id="IPR035966">
    <property type="entry name" value="PKF_sf"/>
</dbReference>
<dbReference type="NCBIfam" id="TIGR02482">
    <property type="entry name" value="PFKA_ATP"/>
    <property type="match status" value="1"/>
</dbReference>
<dbReference type="NCBIfam" id="NF002872">
    <property type="entry name" value="PRK03202.1"/>
    <property type="match status" value="1"/>
</dbReference>
<dbReference type="PANTHER" id="PTHR13697:SF4">
    <property type="entry name" value="ATP-DEPENDENT 6-PHOSPHOFRUCTOKINASE"/>
    <property type="match status" value="1"/>
</dbReference>
<dbReference type="PANTHER" id="PTHR13697">
    <property type="entry name" value="PHOSPHOFRUCTOKINASE"/>
    <property type="match status" value="1"/>
</dbReference>
<dbReference type="Pfam" id="PF00365">
    <property type="entry name" value="PFK"/>
    <property type="match status" value="1"/>
</dbReference>
<dbReference type="PIRSF" id="PIRSF000532">
    <property type="entry name" value="ATP_PFK_prok"/>
    <property type="match status" value="1"/>
</dbReference>
<dbReference type="PRINTS" id="PR00476">
    <property type="entry name" value="PHFRCTKINASE"/>
</dbReference>
<dbReference type="SUPFAM" id="SSF53784">
    <property type="entry name" value="Phosphofructokinase"/>
    <property type="match status" value="1"/>
</dbReference>
<dbReference type="PROSITE" id="PS00433">
    <property type="entry name" value="PHOSPHOFRUCTOKINASE"/>
    <property type="match status" value="1"/>
</dbReference>
<accession>A2RE65</accession>
<keyword id="KW-0021">Allosteric enzyme</keyword>
<keyword id="KW-0067">ATP-binding</keyword>
<keyword id="KW-0963">Cytoplasm</keyword>
<keyword id="KW-0324">Glycolysis</keyword>
<keyword id="KW-0418">Kinase</keyword>
<keyword id="KW-0460">Magnesium</keyword>
<keyword id="KW-0479">Metal-binding</keyword>
<keyword id="KW-0547">Nucleotide-binding</keyword>
<keyword id="KW-0808">Transferase</keyword>
<name>PFKA_STRPG</name>
<organism>
    <name type="scientific">Streptococcus pyogenes serotype M5 (strain Manfredo)</name>
    <dbReference type="NCBI Taxonomy" id="160491"/>
    <lineage>
        <taxon>Bacteria</taxon>
        <taxon>Bacillati</taxon>
        <taxon>Bacillota</taxon>
        <taxon>Bacilli</taxon>
        <taxon>Lactobacillales</taxon>
        <taxon>Streptococcaceae</taxon>
        <taxon>Streptococcus</taxon>
    </lineage>
</organism>
<protein>
    <recommendedName>
        <fullName evidence="1">ATP-dependent 6-phosphofructokinase</fullName>
        <shortName evidence="1">ATP-PFK</shortName>
        <shortName evidence="1">Phosphofructokinase</shortName>
        <ecNumber evidence="1">2.7.1.11</ecNumber>
    </recommendedName>
    <alternativeName>
        <fullName evidence="1">Phosphohexokinase</fullName>
    </alternativeName>
</protein>